<protein>
    <recommendedName>
        <fullName evidence="1">Na(+)/H(+) antiporter NhaA</fullName>
    </recommendedName>
    <alternativeName>
        <fullName evidence="1">Sodium/proton antiporter NhaA</fullName>
    </alternativeName>
</protein>
<accession>Q93F90</accession>
<comment type="function">
    <text evidence="1">Na(+)/H(+) antiporter that extrudes sodium in exchange for external protons.</text>
</comment>
<comment type="catalytic activity">
    <reaction evidence="1">
        <text>Na(+)(in) + 2 H(+)(out) = Na(+)(out) + 2 H(+)(in)</text>
        <dbReference type="Rhea" id="RHEA:29251"/>
        <dbReference type="ChEBI" id="CHEBI:15378"/>
        <dbReference type="ChEBI" id="CHEBI:29101"/>
    </reaction>
    <physiologicalReaction direction="left-to-right" evidence="1">
        <dbReference type="Rhea" id="RHEA:29252"/>
    </physiologicalReaction>
</comment>
<comment type="subcellular location">
    <subcellularLocation>
        <location evidence="1">Cell membrane</location>
        <topology evidence="1">Multi-pass membrane protein</topology>
    </subcellularLocation>
</comment>
<comment type="similarity">
    <text evidence="1">Belongs to the NhaA Na(+)/H(+) (TC 2.A.33) antiporter family.</text>
</comment>
<dbReference type="EMBL" id="AF322256">
    <property type="protein sequence ID" value="AAL15616.1"/>
    <property type="molecule type" value="Genomic_DNA"/>
</dbReference>
<dbReference type="SMR" id="Q93F90"/>
<dbReference type="STRING" id="1890.AFM16_21230"/>
<dbReference type="GO" id="GO:0005886">
    <property type="term" value="C:plasma membrane"/>
    <property type="evidence" value="ECO:0007669"/>
    <property type="project" value="UniProtKB-SubCell"/>
</dbReference>
<dbReference type="GO" id="GO:0015385">
    <property type="term" value="F:sodium:proton antiporter activity"/>
    <property type="evidence" value="ECO:0007669"/>
    <property type="project" value="TreeGrafter"/>
</dbReference>
<dbReference type="GO" id="GO:0006885">
    <property type="term" value="P:regulation of pH"/>
    <property type="evidence" value="ECO:0007669"/>
    <property type="project" value="InterPro"/>
</dbReference>
<dbReference type="Gene3D" id="1.20.1530.10">
    <property type="entry name" value="Na+/H+ antiporter like domain"/>
    <property type="match status" value="1"/>
</dbReference>
<dbReference type="HAMAP" id="MF_01844">
    <property type="entry name" value="NhaA"/>
    <property type="match status" value="1"/>
</dbReference>
<dbReference type="InterPro" id="IPR023171">
    <property type="entry name" value="Na/H_antiporter_dom_sf"/>
</dbReference>
<dbReference type="InterPro" id="IPR004670">
    <property type="entry name" value="NhaA"/>
</dbReference>
<dbReference type="NCBIfam" id="TIGR00773">
    <property type="entry name" value="NhaA"/>
    <property type="match status" value="1"/>
</dbReference>
<dbReference type="PANTHER" id="PTHR30341:SF0">
    <property type="entry name" value="NA(+)_H(+) ANTIPORTER NHAA"/>
    <property type="match status" value="1"/>
</dbReference>
<dbReference type="PANTHER" id="PTHR30341">
    <property type="entry name" value="SODIUM ION/PROTON ANTIPORTER NHAA-RELATED"/>
    <property type="match status" value="1"/>
</dbReference>
<dbReference type="Pfam" id="PF06965">
    <property type="entry name" value="Na_H_antiport_1"/>
    <property type="match status" value="1"/>
</dbReference>
<sequence>MAAPRTPNTARKVLGRLSLPERTFVADALRTETVGGVLLLVATVTALVWANIPALQHSYEAVSHFHFGPSALGLNLSVAHWAADGLLAVFFFVAGIELKRELVAGDLRDPRAAVLPVVAALCGMAVPALVYTLTNLTGHGSTQGWAVPTATDIAFALAVLAVIGTSLPSALRAFLLTLAVVDDLFAILIIAIFFTERINFAALGGAVAGLAVFWLLLRKGVRGWYVYVPLAVVVWALMYNSGVHATIAGVAMGLMLRCTTREGEEHSPGEHIEHLVRPLSAGLAVPLFALFSAGVVVSGGALGDVFTEPETLGVVLGLVVGKTLGIFGSTWLTARFTHAELSEDLEWADIFAVASLAGIGFTVSLLIGELAFAGDTLLTDEVKAAVLTGSLIAALCATVLLKIRNARYRGLCEDEERDEDRDGIPDVYEQDDPAYHLRMADIFERKAAEHRRIAAEKAAAARHGGAEVPGGAGEEDGRPA</sequence>
<proteinExistence type="inferred from homology"/>
<reference key="1">
    <citation type="journal article" date="2002" name="Arch. Microbiol.">
        <title>Cloning and analysis of the simocyclinone biosynthetic gene cluster of Streptomyces antibioticus Tu 6040.</title>
        <authorList>
            <person name="Galm U."/>
            <person name="Schimana J."/>
            <person name="Fiedler H.-P."/>
            <person name="Schmidt J."/>
            <person name="Li S.-M."/>
            <person name="Heide L."/>
        </authorList>
    </citation>
    <scope>NUCLEOTIDE SEQUENCE [GENOMIC DNA]</scope>
    <source>
        <strain>Tu 6040</strain>
    </source>
</reference>
<feature type="chain" id="PRO_0000334445" description="Na(+)/H(+) antiporter NhaA">
    <location>
        <begin position="1"/>
        <end position="480"/>
    </location>
</feature>
<feature type="transmembrane region" description="Helical" evidence="1">
    <location>
        <begin position="34"/>
        <end position="54"/>
    </location>
</feature>
<feature type="transmembrane region" description="Helical" evidence="1">
    <location>
        <begin position="76"/>
        <end position="96"/>
    </location>
</feature>
<feature type="transmembrane region" description="Helical" evidence="1">
    <location>
        <begin position="113"/>
        <end position="133"/>
    </location>
</feature>
<feature type="transmembrane region" description="Helical" evidence="1">
    <location>
        <begin position="144"/>
        <end position="164"/>
    </location>
</feature>
<feature type="transmembrane region" description="Helical" evidence="1">
    <location>
        <begin position="174"/>
        <end position="194"/>
    </location>
</feature>
<feature type="transmembrane region" description="Helical" evidence="1">
    <location>
        <begin position="197"/>
        <end position="217"/>
    </location>
</feature>
<feature type="transmembrane region" description="Helical" evidence="1">
    <location>
        <begin position="223"/>
        <end position="243"/>
    </location>
</feature>
<feature type="transmembrane region" description="Helical" evidence="1">
    <location>
        <begin position="282"/>
        <end position="302"/>
    </location>
</feature>
<feature type="transmembrane region" description="Helical" evidence="1">
    <location>
        <begin position="312"/>
        <end position="332"/>
    </location>
</feature>
<feature type="transmembrane region" description="Helical" evidence="1">
    <location>
        <begin position="350"/>
        <end position="370"/>
    </location>
</feature>
<feature type="transmembrane region" description="Helical" evidence="1">
    <location>
        <begin position="381"/>
        <end position="401"/>
    </location>
</feature>
<feature type="region of interest" description="Disordered" evidence="2">
    <location>
        <begin position="454"/>
        <end position="480"/>
    </location>
</feature>
<evidence type="ECO:0000255" key="1">
    <source>
        <dbReference type="HAMAP-Rule" id="MF_01844"/>
    </source>
</evidence>
<evidence type="ECO:0000256" key="2">
    <source>
        <dbReference type="SAM" id="MobiDB-lite"/>
    </source>
</evidence>
<organism>
    <name type="scientific">Streptomyces antibioticus</name>
    <dbReference type="NCBI Taxonomy" id="1890"/>
    <lineage>
        <taxon>Bacteria</taxon>
        <taxon>Bacillati</taxon>
        <taxon>Actinomycetota</taxon>
        <taxon>Actinomycetes</taxon>
        <taxon>Kitasatosporales</taxon>
        <taxon>Streptomycetaceae</taxon>
        <taxon>Streptomyces</taxon>
    </lineage>
</organism>
<name>NHAA_STRAT</name>
<keyword id="KW-0050">Antiport</keyword>
<keyword id="KW-1003">Cell membrane</keyword>
<keyword id="KW-0406">Ion transport</keyword>
<keyword id="KW-0472">Membrane</keyword>
<keyword id="KW-0915">Sodium</keyword>
<keyword id="KW-0739">Sodium transport</keyword>
<keyword id="KW-0812">Transmembrane</keyword>
<keyword id="KW-1133">Transmembrane helix</keyword>
<keyword id="KW-0813">Transport</keyword>
<gene>
    <name evidence="1" type="primary">nhaA</name>
</gene>